<accession>Q9CBK2</accession>
<name>RL1_MYCLE</name>
<organism>
    <name type="scientific">Mycobacterium leprae (strain TN)</name>
    <dbReference type="NCBI Taxonomy" id="272631"/>
    <lineage>
        <taxon>Bacteria</taxon>
        <taxon>Bacillati</taxon>
        <taxon>Actinomycetota</taxon>
        <taxon>Actinomycetes</taxon>
        <taxon>Mycobacteriales</taxon>
        <taxon>Mycobacteriaceae</taxon>
        <taxon>Mycobacterium</taxon>
    </lineage>
</organism>
<gene>
    <name evidence="1" type="primary">rplA</name>
    <name type="ordered locus">ML1904</name>
</gene>
<proteinExistence type="inferred from homology"/>
<keyword id="KW-1185">Reference proteome</keyword>
<keyword id="KW-0678">Repressor</keyword>
<keyword id="KW-0687">Ribonucleoprotein</keyword>
<keyword id="KW-0689">Ribosomal protein</keyword>
<keyword id="KW-0694">RNA-binding</keyword>
<keyword id="KW-0699">rRNA-binding</keyword>
<keyword id="KW-0810">Translation regulation</keyword>
<keyword id="KW-0820">tRNA-binding</keyword>
<feature type="chain" id="PRO_0000125695" description="Large ribosomal subunit protein uL1">
    <location>
        <begin position="1"/>
        <end position="235"/>
    </location>
</feature>
<evidence type="ECO:0000255" key="1">
    <source>
        <dbReference type="HAMAP-Rule" id="MF_01318"/>
    </source>
</evidence>
<evidence type="ECO:0000305" key="2"/>
<sequence length="235" mass="24976">MSKSSKAYRAAAVKVDRTNLYTPLQAAKLAKETSSTRQDATVEVAIRLGVDSRKADQMVRGTVNLPHGTGKTARVAVFAVGEKADVAVAAGADVVGSDDLIEKIQGGWLEFDAAVATPDQMAKVGRIARVLGPRGLMPNPKTGTVTPDVAKAVADIKGGKINFRVDKQANLHFVIGKASFDEKRLAENYGAALEEVLRLKPSSSKGRYLKKVTVSTTMGPGIPVDPSITRNFTEE</sequence>
<reference key="1">
    <citation type="journal article" date="2001" name="Nature">
        <title>Massive gene decay in the leprosy bacillus.</title>
        <authorList>
            <person name="Cole S.T."/>
            <person name="Eiglmeier K."/>
            <person name="Parkhill J."/>
            <person name="James K.D."/>
            <person name="Thomson N.R."/>
            <person name="Wheeler P.R."/>
            <person name="Honore N."/>
            <person name="Garnier T."/>
            <person name="Churcher C.M."/>
            <person name="Harris D.E."/>
            <person name="Mungall K.L."/>
            <person name="Basham D."/>
            <person name="Brown D."/>
            <person name="Chillingworth T."/>
            <person name="Connor R."/>
            <person name="Davies R.M."/>
            <person name="Devlin K."/>
            <person name="Duthoy S."/>
            <person name="Feltwell T."/>
            <person name="Fraser A."/>
            <person name="Hamlin N."/>
            <person name="Holroyd S."/>
            <person name="Hornsby T."/>
            <person name="Jagels K."/>
            <person name="Lacroix C."/>
            <person name="Maclean J."/>
            <person name="Moule S."/>
            <person name="Murphy L.D."/>
            <person name="Oliver K."/>
            <person name="Quail M.A."/>
            <person name="Rajandream M.A."/>
            <person name="Rutherford K.M."/>
            <person name="Rutter S."/>
            <person name="Seeger K."/>
            <person name="Simon S."/>
            <person name="Simmonds M."/>
            <person name="Skelton J."/>
            <person name="Squares R."/>
            <person name="Squares S."/>
            <person name="Stevens K."/>
            <person name="Taylor K."/>
            <person name="Whitehead S."/>
            <person name="Woodward J.R."/>
            <person name="Barrell B.G."/>
        </authorList>
    </citation>
    <scope>NUCLEOTIDE SEQUENCE [LARGE SCALE GENOMIC DNA]</scope>
    <source>
        <strain>TN</strain>
    </source>
</reference>
<protein>
    <recommendedName>
        <fullName evidence="1">Large ribosomal subunit protein uL1</fullName>
    </recommendedName>
    <alternativeName>
        <fullName evidence="2">50S ribosomal protein L1</fullName>
    </alternativeName>
</protein>
<dbReference type="EMBL" id="AL583923">
    <property type="protein sequence ID" value="CAC30858.1"/>
    <property type="molecule type" value="Genomic_DNA"/>
</dbReference>
<dbReference type="PIR" id="B87147">
    <property type="entry name" value="B87147"/>
</dbReference>
<dbReference type="RefSeq" id="NP_302281.1">
    <property type="nucleotide sequence ID" value="NC_002677.1"/>
</dbReference>
<dbReference type="RefSeq" id="WP_010908602.1">
    <property type="nucleotide sequence ID" value="NC_002677.1"/>
</dbReference>
<dbReference type="SMR" id="Q9CBK2"/>
<dbReference type="STRING" id="272631.gene:17575752"/>
<dbReference type="KEGG" id="mle:ML1904"/>
<dbReference type="PATRIC" id="fig|272631.5.peg.3612"/>
<dbReference type="Leproma" id="ML1904"/>
<dbReference type="eggNOG" id="COG0081">
    <property type="taxonomic scope" value="Bacteria"/>
</dbReference>
<dbReference type="HOGENOM" id="CLU_062853_0_0_11"/>
<dbReference type="OrthoDB" id="9803740at2"/>
<dbReference type="Proteomes" id="UP000000806">
    <property type="component" value="Chromosome"/>
</dbReference>
<dbReference type="GO" id="GO:0015934">
    <property type="term" value="C:large ribosomal subunit"/>
    <property type="evidence" value="ECO:0007669"/>
    <property type="project" value="InterPro"/>
</dbReference>
<dbReference type="GO" id="GO:0019843">
    <property type="term" value="F:rRNA binding"/>
    <property type="evidence" value="ECO:0007669"/>
    <property type="project" value="UniProtKB-UniRule"/>
</dbReference>
<dbReference type="GO" id="GO:0003735">
    <property type="term" value="F:structural constituent of ribosome"/>
    <property type="evidence" value="ECO:0007669"/>
    <property type="project" value="InterPro"/>
</dbReference>
<dbReference type="GO" id="GO:0000049">
    <property type="term" value="F:tRNA binding"/>
    <property type="evidence" value="ECO:0007669"/>
    <property type="project" value="UniProtKB-KW"/>
</dbReference>
<dbReference type="GO" id="GO:0006417">
    <property type="term" value="P:regulation of translation"/>
    <property type="evidence" value="ECO:0007669"/>
    <property type="project" value="UniProtKB-KW"/>
</dbReference>
<dbReference type="GO" id="GO:0006412">
    <property type="term" value="P:translation"/>
    <property type="evidence" value="ECO:0007669"/>
    <property type="project" value="UniProtKB-UniRule"/>
</dbReference>
<dbReference type="CDD" id="cd00403">
    <property type="entry name" value="Ribosomal_L1"/>
    <property type="match status" value="1"/>
</dbReference>
<dbReference type="FunFam" id="3.40.50.790:FF:000001">
    <property type="entry name" value="50S ribosomal protein L1"/>
    <property type="match status" value="1"/>
</dbReference>
<dbReference type="Gene3D" id="3.30.190.20">
    <property type="match status" value="1"/>
</dbReference>
<dbReference type="Gene3D" id="3.40.50.790">
    <property type="match status" value="1"/>
</dbReference>
<dbReference type="HAMAP" id="MF_01318_B">
    <property type="entry name" value="Ribosomal_uL1_B"/>
    <property type="match status" value="1"/>
</dbReference>
<dbReference type="InterPro" id="IPR005878">
    <property type="entry name" value="Ribosom_uL1_bac-type"/>
</dbReference>
<dbReference type="InterPro" id="IPR002143">
    <property type="entry name" value="Ribosomal_uL1"/>
</dbReference>
<dbReference type="InterPro" id="IPR023674">
    <property type="entry name" value="Ribosomal_uL1-like"/>
</dbReference>
<dbReference type="InterPro" id="IPR028364">
    <property type="entry name" value="Ribosomal_uL1/biogenesis"/>
</dbReference>
<dbReference type="InterPro" id="IPR016095">
    <property type="entry name" value="Ribosomal_uL1_3-a/b-sand"/>
</dbReference>
<dbReference type="InterPro" id="IPR023673">
    <property type="entry name" value="Ribosomal_uL1_CS"/>
</dbReference>
<dbReference type="NCBIfam" id="TIGR01169">
    <property type="entry name" value="rplA_bact"/>
    <property type="match status" value="1"/>
</dbReference>
<dbReference type="PANTHER" id="PTHR36427">
    <property type="entry name" value="54S RIBOSOMAL PROTEIN L1, MITOCHONDRIAL"/>
    <property type="match status" value="1"/>
</dbReference>
<dbReference type="PANTHER" id="PTHR36427:SF3">
    <property type="entry name" value="LARGE RIBOSOMAL SUBUNIT PROTEIN UL1M"/>
    <property type="match status" value="1"/>
</dbReference>
<dbReference type="Pfam" id="PF00687">
    <property type="entry name" value="Ribosomal_L1"/>
    <property type="match status" value="1"/>
</dbReference>
<dbReference type="PIRSF" id="PIRSF002155">
    <property type="entry name" value="Ribosomal_L1"/>
    <property type="match status" value="1"/>
</dbReference>
<dbReference type="SUPFAM" id="SSF56808">
    <property type="entry name" value="Ribosomal protein L1"/>
    <property type="match status" value="1"/>
</dbReference>
<dbReference type="PROSITE" id="PS01199">
    <property type="entry name" value="RIBOSOMAL_L1"/>
    <property type="match status" value="1"/>
</dbReference>
<comment type="function">
    <text evidence="1">Binds directly to 23S rRNA. The L1 stalk is quite mobile in the ribosome, and is involved in E site tRNA release.</text>
</comment>
<comment type="function">
    <text evidence="1">Protein L1 is also a translational repressor protein, it controls the translation of the L11 operon by binding to its mRNA.</text>
</comment>
<comment type="subunit">
    <text evidence="1">Part of the 50S ribosomal subunit.</text>
</comment>
<comment type="similarity">
    <text evidence="1">Belongs to the universal ribosomal protein uL1 family.</text>
</comment>